<keyword id="KW-0007">Acetylation</keyword>
<keyword id="KW-0106">Calcium</keyword>
<keyword id="KW-0148">Chlorophyll</keyword>
<keyword id="KW-0157">Chromophore</keyword>
<keyword id="KW-0249">Electron transport</keyword>
<keyword id="KW-0359">Herbicide resistance</keyword>
<keyword id="KW-0408">Iron</keyword>
<keyword id="KW-0460">Magnesium</keyword>
<keyword id="KW-0464">Manganese</keyword>
<keyword id="KW-0472">Membrane</keyword>
<keyword id="KW-0479">Metal-binding</keyword>
<keyword id="KW-0560">Oxidoreductase</keyword>
<keyword id="KW-0597">Phosphoprotein</keyword>
<keyword id="KW-0602">Photosynthesis</keyword>
<keyword id="KW-0604">Photosystem II</keyword>
<keyword id="KW-0934">Plastid</keyword>
<keyword id="KW-0812">Transmembrane</keyword>
<keyword id="KW-1133">Transmembrane helix</keyword>
<keyword id="KW-0813">Transport</keyword>
<proteinExistence type="inferred from homology"/>
<feature type="initiator methionine" description="Removed" evidence="1">
    <location>
        <position position="1"/>
    </location>
</feature>
<feature type="chain" id="PRO_0000339982" description="Photosystem II protein D1" evidence="1">
    <location>
        <begin position="2"/>
        <end position="344"/>
    </location>
</feature>
<feature type="propeptide" id="PRO_0000339983" evidence="1">
    <location>
        <begin position="345"/>
        <end position="353"/>
    </location>
</feature>
<feature type="transmembrane region" description="Helical" evidence="1">
    <location>
        <begin position="29"/>
        <end position="46"/>
    </location>
</feature>
<feature type="transmembrane region" description="Helical" evidence="1">
    <location>
        <begin position="118"/>
        <end position="133"/>
    </location>
</feature>
<feature type="transmembrane region" description="Helical" evidence="1">
    <location>
        <begin position="142"/>
        <end position="156"/>
    </location>
</feature>
<feature type="transmembrane region" description="Helical" evidence="1">
    <location>
        <begin position="197"/>
        <end position="218"/>
    </location>
</feature>
<feature type="transmembrane region" description="Helical" evidence="1">
    <location>
        <begin position="274"/>
        <end position="288"/>
    </location>
</feature>
<feature type="binding site" description="axial binding residue" evidence="1">
    <location>
        <position position="118"/>
    </location>
    <ligand>
        <name>chlorophyll a</name>
        <dbReference type="ChEBI" id="CHEBI:58416"/>
        <label>ChlzD1</label>
    </ligand>
    <ligandPart>
        <name>Mg</name>
        <dbReference type="ChEBI" id="CHEBI:25107"/>
    </ligandPart>
</feature>
<feature type="binding site" evidence="1">
    <location>
        <position position="126"/>
    </location>
    <ligand>
        <name>pheophytin a</name>
        <dbReference type="ChEBI" id="CHEBI:136840"/>
        <label>D1</label>
    </ligand>
</feature>
<feature type="binding site" evidence="1">
    <location>
        <position position="170"/>
    </location>
    <ligand>
        <name>[CaMn4O5] cluster</name>
        <dbReference type="ChEBI" id="CHEBI:189552"/>
    </ligand>
</feature>
<feature type="binding site" evidence="1">
    <location>
        <position position="189"/>
    </location>
    <ligand>
        <name>[CaMn4O5] cluster</name>
        <dbReference type="ChEBI" id="CHEBI:189552"/>
    </ligand>
</feature>
<feature type="binding site" description="axial binding residue" evidence="1">
    <location>
        <position position="198"/>
    </location>
    <ligand>
        <name>chlorophyll a</name>
        <dbReference type="ChEBI" id="CHEBI:58416"/>
        <label>PD1</label>
    </ligand>
    <ligandPart>
        <name>Mg</name>
        <dbReference type="ChEBI" id="CHEBI:25107"/>
    </ligandPart>
</feature>
<feature type="binding site" evidence="1">
    <location>
        <position position="215"/>
    </location>
    <ligand>
        <name>a quinone</name>
        <dbReference type="ChEBI" id="CHEBI:132124"/>
        <label>B</label>
    </ligand>
</feature>
<feature type="binding site" evidence="1">
    <location>
        <position position="215"/>
    </location>
    <ligand>
        <name>Fe cation</name>
        <dbReference type="ChEBI" id="CHEBI:24875"/>
        <note>ligand shared with heterodimeric partner</note>
    </ligand>
</feature>
<feature type="binding site" evidence="1">
    <location>
        <begin position="264"/>
        <end position="265"/>
    </location>
    <ligand>
        <name>a quinone</name>
        <dbReference type="ChEBI" id="CHEBI:132124"/>
        <label>B</label>
    </ligand>
</feature>
<feature type="binding site" evidence="1">
    <location>
        <position position="272"/>
    </location>
    <ligand>
        <name>Fe cation</name>
        <dbReference type="ChEBI" id="CHEBI:24875"/>
        <note>ligand shared with heterodimeric partner</note>
    </ligand>
</feature>
<feature type="binding site" evidence="1">
    <location>
        <position position="332"/>
    </location>
    <ligand>
        <name>[CaMn4O5] cluster</name>
        <dbReference type="ChEBI" id="CHEBI:189552"/>
    </ligand>
</feature>
<feature type="binding site" evidence="1">
    <location>
        <position position="333"/>
    </location>
    <ligand>
        <name>[CaMn4O5] cluster</name>
        <dbReference type="ChEBI" id="CHEBI:189552"/>
    </ligand>
</feature>
<feature type="binding site" evidence="1">
    <location>
        <position position="342"/>
    </location>
    <ligand>
        <name>[CaMn4O5] cluster</name>
        <dbReference type="ChEBI" id="CHEBI:189552"/>
    </ligand>
</feature>
<feature type="binding site" evidence="1">
    <location>
        <position position="344"/>
    </location>
    <ligand>
        <name>[CaMn4O5] cluster</name>
        <dbReference type="ChEBI" id="CHEBI:189552"/>
    </ligand>
</feature>
<feature type="site" description="Tyrosine radical intermediate" evidence="1">
    <location>
        <position position="161"/>
    </location>
</feature>
<feature type="site" description="Stabilizes free radical intermediate" evidence="1">
    <location>
        <position position="190"/>
    </location>
</feature>
<feature type="site" description="Cleavage; by CTPA" evidence="1">
    <location>
        <begin position="344"/>
        <end position="345"/>
    </location>
</feature>
<feature type="modified residue" description="N-acetylthreonine" evidence="1">
    <location>
        <position position="2"/>
    </location>
</feature>
<feature type="modified residue" description="Phosphothreonine" evidence="1">
    <location>
        <position position="2"/>
    </location>
</feature>
<geneLocation type="plastid"/>
<reference key="1">
    <citation type="journal article" date="2007" name="BMC Plant Biol.">
        <title>Complete plastid genome sequences suggest strong selection for retention of photosynthetic genes in the parasitic plant genus Cuscuta.</title>
        <authorList>
            <person name="McNeal J.R."/>
            <person name="Kuehl J.V."/>
            <person name="Boore J.L."/>
            <person name="dePamphilis C.W."/>
        </authorList>
    </citation>
    <scope>NUCLEOTIDE SEQUENCE [LARGE SCALE GENOMIC DNA]</scope>
</reference>
<name>PSBA_CUSEX</name>
<gene>
    <name evidence="1" type="primary">psbA</name>
</gene>
<organism>
    <name type="scientific">Cuscuta exaltata</name>
    <name type="common">Tall dodder</name>
    <dbReference type="NCBI Taxonomy" id="476139"/>
    <lineage>
        <taxon>Eukaryota</taxon>
        <taxon>Viridiplantae</taxon>
        <taxon>Streptophyta</taxon>
        <taxon>Embryophyta</taxon>
        <taxon>Tracheophyta</taxon>
        <taxon>Spermatophyta</taxon>
        <taxon>Magnoliopsida</taxon>
        <taxon>eudicotyledons</taxon>
        <taxon>Gunneridae</taxon>
        <taxon>Pentapetalae</taxon>
        <taxon>asterids</taxon>
        <taxon>lamiids</taxon>
        <taxon>Solanales</taxon>
        <taxon>Convolvulaceae</taxon>
        <taxon>Cuscuteae</taxon>
        <taxon>Cuscuta</taxon>
        <taxon>Cuscuta subgen. Monogynella</taxon>
    </lineage>
</organism>
<dbReference type="EC" id="1.10.3.9" evidence="1"/>
<dbReference type="EMBL" id="EU189132">
    <property type="protein sequence ID" value="ABW83676.1"/>
    <property type="molecule type" value="Genomic_DNA"/>
</dbReference>
<dbReference type="RefSeq" id="YP_001542512.1">
    <property type="nucleotide sequence ID" value="NC_009963.1"/>
</dbReference>
<dbReference type="SMR" id="A8W3A5"/>
<dbReference type="GeneID" id="5729640"/>
<dbReference type="GO" id="GO:0009535">
    <property type="term" value="C:chloroplast thylakoid membrane"/>
    <property type="evidence" value="ECO:0007669"/>
    <property type="project" value="TreeGrafter"/>
</dbReference>
<dbReference type="GO" id="GO:0009523">
    <property type="term" value="C:photosystem II"/>
    <property type="evidence" value="ECO:0007669"/>
    <property type="project" value="UniProtKB-KW"/>
</dbReference>
<dbReference type="GO" id="GO:0016168">
    <property type="term" value="F:chlorophyll binding"/>
    <property type="evidence" value="ECO:0007669"/>
    <property type="project" value="UniProtKB-UniRule"/>
</dbReference>
<dbReference type="GO" id="GO:0045156">
    <property type="term" value="F:electron transporter, transferring electrons within the cyclic electron transport pathway of photosynthesis activity"/>
    <property type="evidence" value="ECO:0007669"/>
    <property type="project" value="InterPro"/>
</dbReference>
<dbReference type="GO" id="GO:0005506">
    <property type="term" value="F:iron ion binding"/>
    <property type="evidence" value="ECO:0007669"/>
    <property type="project" value="UniProtKB-UniRule"/>
</dbReference>
<dbReference type="GO" id="GO:0016682">
    <property type="term" value="F:oxidoreductase activity, acting on diphenols and related substances as donors, oxygen as acceptor"/>
    <property type="evidence" value="ECO:0007669"/>
    <property type="project" value="UniProtKB-UniRule"/>
</dbReference>
<dbReference type="GO" id="GO:0010242">
    <property type="term" value="F:oxygen evolving activity"/>
    <property type="evidence" value="ECO:0007669"/>
    <property type="project" value="UniProtKB-EC"/>
</dbReference>
<dbReference type="GO" id="GO:0009772">
    <property type="term" value="P:photosynthetic electron transport in photosystem II"/>
    <property type="evidence" value="ECO:0007669"/>
    <property type="project" value="InterPro"/>
</dbReference>
<dbReference type="GO" id="GO:0009635">
    <property type="term" value="P:response to herbicide"/>
    <property type="evidence" value="ECO:0007669"/>
    <property type="project" value="UniProtKB-KW"/>
</dbReference>
<dbReference type="CDD" id="cd09289">
    <property type="entry name" value="Photosystem-II_D1"/>
    <property type="match status" value="1"/>
</dbReference>
<dbReference type="FunFam" id="1.20.85.10:FF:000002">
    <property type="entry name" value="Photosystem II protein D1"/>
    <property type="match status" value="1"/>
</dbReference>
<dbReference type="Gene3D" id="1.20.85.10">
    <property type="entry name" value="Photosystem II protein D1-like"/>
    <property type="match status" value="1"/>
</dbReference>
<dbReference type="HAMAP" id="MF_01379">
    <property type="entry name" value="PSII_PsbA_D1"/>
    <property type="match status" value="1"/>
</dbReference>
<dbReference type="InterPro" id="IPR055266">
    <property type="entry name" value="D1/D2"/>
</dbReference>
<dbReference type="InterPro" id="IPR036854">
    <property type="entry name" value="Photo_II_D1/D2_sf"/>
</dbReference>
<dbReference type="InterPro" id="IPR000484">
    <property type="entry name" value="Photo_RC_L/M"/>
</dbReference>
<dbReference type="InterPro" id="IPR055265">
    <property type="entry name" value="Photo_RC_L/M_CS"/>
</dbReference>
<dbReference type="InterPro" id="IPR005867">
    <property type="entry name" value="PSII_D1"/>
</dbReference>
<dbReference type="NCBIfam" id="TIGR01151">
    <property type="entry name" value="psbA"/>
    <property type="match status" value="1"/>
</dbReference>
<dbReference type="PANTHER" id="PTHR33149:SF12">
    <property type="entry name" value="PHOTOSYSTEM II D2 PROTEIN"/>
    <property type="match status" value="1"/>
</dbReference>
<dbReference type="PANTHER" id="PTHR33149">
    <property type="entry name" value="PHOTOSYSTEM II PROTEIN D1"/>
    <property type="match status" value="1"/>
</dbReference>
<dbReference type="Pfam" id="PF00124">
    <property type="entry name" value="Photo_RC"/>
    <property type="match status" value="1"/>
</dbReference>
<dbReference type="PRINTS" id="PR00256">
    <property type="entry name" value="REACTNCENTRE"/>
</dbReference>
<dbReference type="SUPFAM" id="SSF81483">
    <property type="entry name" value="Bacterial photosystem II reaction centre, L and M subunits"/>
    <property type="match status" value="1"/>
</dbReference>
<dbReference type="PROSITE" id="PS00244">
    <property type="entry name" value="REACTION_CENTER"/>
    <property type="match status" value="1"/>
</dbReference>
<protein>
    <recommendedName>
        <fullName evidence="1">Photosystem II protein D1</fullName>
        <shortName evidence="1">PSII D1 protein</shortName>
        <ecNumber evidence="1">1.10.3.9</ecNumber>
    </recommendedName>
    <alternativeName>
        <fullName evidence="1">Photosystem II Q(B) protein</fullName>
    </alternativeName>
</protein>
<sequence length="353" mass="38962">MTAILERRESENLWGRFCNWITSTENRLYIGWFGVLMIPTLLTATSVFIIAFIAAPPVDIDGIREPVSGSLLYGNNIISGAIIPTSAAIGLHFYPIWEAASVDEWLYNGGPYELIVLHFLLGVACYMGREWELSFRLGMRPWIAVAYSAPVAAATAVFLIYPIGQGSFSDGMPLGISGTFNFMIVFQAEHNILMHPFHMLGVAGVFGGSLFSAMHGSLVTSSLIRETTENESANEGYRFGQEEETYNIVAAHGYFGRLIFQYASFNNSRSLHFFLAAWPVVGIWFTALGISTMAFNLNGFNFNQSVVDSQGRVINTWADIINRANLGMEVMHERNAHNFPLDLAAIEAPATNG</sequence>
<accession>A8W3A5</accession>
<comment type="function">
    <text evidence="1">Photosystem II (PSII) is a light-driven water:plastoquinone oxidoreductase that uses light energy to abstract electrons from H(2)O, generating O(2) and a proton gradient subsequently used for ATP formation. It consists of a core antenna complex that captures photons, and an electron transfer chain that converts photonic excitation into a charge separation. The D1/D2 (PsbA/PsbD) reaction center heterodimer binds P680, the primary electron donor of PSII as well as several subsequent electron acceptors.</text>
</comment>
<comment type="catalytic activity">
    <reaction evidence="1">
        <text>2 a plastoquinone + 4 hnu + 2 H2O = 2 a plastoquinol + O2</text>
        <dbReference type="Rhea" id="RHEA:36359"/>
        <dbReference type="Rhea" id="RHEA-COMP:9561"/>
        <dbReference type="Rhea" id="RHEA-COMP:9562"/>
        <dbReference type="ChEBI" id="CHEBI:15377"/>
        <dbReference type="ChEBI" id="CHEBI:15379"/>
        <dbReference type="ChEBI" id="CHEBI:17757"/>
        <dbReference type="ChEBI" id="CHEBI:30212"/>
        <dbReference type="ChEBI" id="CHEBI:62192"/>
        <dbReference type="EC" id="1.10.3.9"/>
    </reaction>
</comment>
<comment type="cofactor">
    <text evidence="1">The D1/D2 heterodimer binds P680, chlorophylls that are the primary electron donor of PSII, and subsequent electron acceptors. It shares a non-heme iron and each subunit binds pheophytin, quinone, additional chlorophylls, carotenoids and lipids. D1 provides most of the ligands for the Mn4-Ca-O5 cluster of the oxygen-evolving complex (OEC). There is also a Cl(-1) ion associated with D1 and D2, which is required for oxygen evolution. The PSII complex binds additional chlorophylls, carotenoids and specific lipids.</text>
</comment>
<comment type="subunit">
    <text evidence="1">PSII is composed of 1 copy each of membrane proteins PsbA, PsbB, PsbC, PsbD, PsbE, PsbF, PsbH, PsbI, PsbJ, PsbK, PsbL, PsbM, PsbT, PsbX, PsbY, PsbZ, Psb30/Ycf12, at least 3 peripheral proteins of the oxygen-evolving complex and a large number of cofactors. It forms dimeric complexes.</text>
</comment>
<comment type="subcellular location">
    <subcellularLocation>
        <location evidence="2">Plastid membrane</location>
        <topology evidence="1">Multi-pass membrane protein</topology>
    </subcellularLocation>
</comment>
<comment type="PTM">
    <text evidence="1">Tyr-161 forms a radical intermediate that is referred to as redox-active TyrZ, YZ or Y-Z.</text>
</comment>
<comment type="PTM">
    <text evidence="1">C-terminally processed by CTPA; processing is essential to allow assembly of the oxygen-evolving complex and thus photosynthetic growth.</text>
</comment>
<comment type="miscellaneous">
    <text evidence="1">2 of the reaction center chlorophylls (ChlD1 and ChlD2) are entirely coordinated by water.</text>
</comment>
<comment type="miscellaneous">
    <text evidence="1">Herbicides such as atrazine, BNT, diuron or ioxynil bind in the Q(B) binding site and block subsequent electron transfer.</text>
</comment>
<comment type="similarity">
    <text evidence="1">Belongs to the reaction center PufL/M/PsbA/D family.</text>
</comment>
<comment type="caution">
    <text evidence="2">Young tissue from this organism is photosynthetic and contains some thylakoids, although the photosynthetic activity does not exceed the light compensation point.</text>
</comment>
<evidence type="ECO:0000255" key="1">
    <source>
        <dbReference type="HAMAP-Rule" id="MF_01379"/>
    </source>
</evidence>
<evidence type="ECO:0000305" key="2"/>